<comment type="function">
    <text evidence="4">May be involved in the maintenance of mitochondrial organization and mitochondrial cristae structure.</text>
</comment>
<comment type="interaction">
    <interactant intactId="EBI-16721660">
        <id>Q8WYQ3</id>
    </interactant>
    <interactant intactId="EBI-2321769">
        <id>Q9Y6H1</id>
        <label>CHCHD2</label>
    </interactant>
    <organismsDiffer>false</organismsDiffer>
    <experiments>15</experiments>
</comment>
<comment type="interaction">
    <interactant intactId="EBI-16721660">
        <id>Q8WYQ3</id>
    </interactant>
    <interactant intactId="EBI-473801">
        <id>Q16891</id>
        <label>IMMT</label>
    </interactant>
    <organismsDiffer>false</organismsDiffer>
    <experiments>4</experiments>
</comment>
<comment type="subcellular location">
    <subcellularLocation>
        <location evidence="4">Mitochondrion intermembrane space</location>
    </subcellularLocation>
    <text evidence="4">Enriched at the cristae junctions.</text>
</comment>
<comment type="tissue specificity">
    <text evidence="4">Ubiquitously expressed. Higher expression is observed in heart and liver.</text>
</comment>
<comment type="disease" evidence="4 5">
    <disease id="DI-04163">
        <name>Frontotemporal dementia and/or amyotrophic lateral sclerosis 2</name>
        <acronym>FTDALS2</acronym>
        <description>A neurodegenerative disorder characterized by frontotemporal dementia and/or amyotrophic lateral sclerosis in affected individuals. There is high intrafamilial variation. Frontotemporal dementia is characterized by frontal and temporal lobe atrophy associated with neuronal loss, gliosis, and dementia. Patients exhibit progressive changes in social, behavioral, and/or language function. Amyotrophic lateral sclerosis is characterized by the death of motor neurons in the brain, brainstem, and spinal cord, resulting in fatal paralysis.</description>
        <dbReference type="MIM" id="615911"/>
    </disease>
    <text evidence="4">The disease is caused by variants affecting the gene represented in this entry. The pathological events leading to disease involve fragmentation of the mitochondrial network, mitochondrial ultrastructural abnormalities including loss, disorganization and dilatation of cristae, and mitochondrial dysfunction associated with respiratory chain deficiency (PubMed:24934289).</text>
</comment>
<comment type="disease" evidence="7">
    <disease id="DI-04345">
        <name>Spinal muscular atrophy, Jokela type</name>
        <acronym>SMAJ</acronym>
        <description>An autosomal dominant, slowly progressive, lower motor neuron disease. SMAJ is characterized by adult-onset of muscle cramps and fasciculations affecting the proximal and distal muscles of the upper and lower limbs. The disorder results in weakness and mild muscle atrophy later in life.</description>
        <dbReference type="MIM" id="615048"/>
    </disease>
    <text>The disease is caused by variants affecting the gene represented in this entry.</text>
</comment>
<comment type="disease" evidence="6">
    <disease id="DI-04333">
        <name>Myopathy, isolated mitochondrial, autosomal dominant</name>
        <acronym>IMMD</acronym>
        <description>A mitochondrial myopathy presenting with severe exercise intolerance, progressive proximal weakness, and lactic acidemia. The disorder is slowly progressive, with later involvement of facial muscles, muscles of the upper limbs, and distal muscles.</description>
        <dbReference type="MIM" id="616209"/>
    </disease>
    <text>The disease is caused by variants affecting the gene represented in this entry.</text>
</comment>
<dbReference type="EMBL" id="AB050774">
    <property type="protein sequence ID" value="BAB83036.1"/>
    <property type="molecule type" value="Genomic_DNA"/>
</dbReference>
<dbReference type="EMBL" id="AK289560">
    <property type="protein sequence ID" value="BAF82249.1"/>
    <property type="molecule type" value="mRNA"/>
</dbReference>
<dbReference type="EMBL" id="CH471095">
    <property type="protein sequence ID" value="EAW59602.1"/>
    <property type="molecule type" value="Genomic_DNA"/>
</dbReference>
<dbReference type="EMBL" id="BC065232">
    <property type="protein sequence ID" value="AAH65232.1"/>
    <property type="molecule type" value="mRNA"/>
</dbReference>
<dbReference type="CCDS" id="CCDS13815.1"/>
<dbReference type="RefSeq" id="NP_001288268.1">
    <property type="nucleotide sequence ID" value="NM_001301339.1"/>
</dbReference>
<dbReference type="RefSeq" id="NP_998885.1">
    <property type="nucleotide sequence ID" value="NM_213720.3"/>
</dbReference>
<dbReference type="SMR" id="Q8WYQ3"/>
<dbReference type="BioGRID" id="134810">
    <property type="interactions" value="85"/>
</dbReference>
<dbReference type="FunCoup" id="Q8WYQ3">
    <property type="interactions" value="340"/>
</dbReference>
<dbReference type="IntAct" id="Q8WYQ3">
    <property type="interactions" value="101"/>
</dbReference>
<dbReference type="MINT" id="Q8WYQ3"/>
<dbReference type="STRING" id="9606.ENSP00000384973"/>
<dbReference type="GlyGen" id="Q8WYQ3">
    <property type="glycosylation" value="1 site"/>
</dbReference>
<dbReference type="iPTMnet" id="Q8WYQ3"/>
<dbReference type="PhosphoSitePlus" id="Q8WYQ3"/>
<dbReference type="BioMuta" id="CHCHD10"/>
<dbReference type="DMDM" id="74731006"/>
<dbReference type="jPOST" id="Q8WYQ3"/>
<dbReference type="MassIVE" id="Q8WYQ3"/>
<dbReference type="PaxDb" id="9606-ENSP00000418428"/>
<dbReference type="PeptideAtlas" id="Q8WYQ3"/>
<dbReference type="ProteomicsDB" id="75185"/>
<dbReference type="Antibodypedia" id="48878">
    <property type="antibodies" value="121 antibodies from 22 providers"/>
</dbReference>
<dbReference type="DNASU" id="400916"/>
<dbReference type="YCharOS" id="Q8WYQ3">
    <property type="antibodies" value="Tested 4 antibodies from 2 manufacturers"/>
</dbReference>
<dbReference type="Ensembl" id="ENST00000484558.3">
    <property type="protein sequence ID" value="ENSP00000418428.3"/>
    <property type="gene ID" value="ENSG00000250479.9"/>
</dbReference>
<dbReference type="Ensembl" id="ENST00000629095.1">
    <property type="protein sequence ID" value="ENSP00000487006.1"/>
    <property type="gene ID" value="ENSG00000273607.3"/>
</dbReference>
<dbReference type="GeneID" id="400916"/>
<dbReference type="KEGG" id="hsa:400916"/>
<dbReference type="MANE-Select" id="ENST00000484558.3">
    <property type="protein sequence ID" value="ENSP00000418428.3"/>
    <property type="RefSeq nucleotide sequence ID" value="NM_213720.3"/>
    <property type="RefSeq protein sequence ID" value="NP_998885.1"/>
</dbReference>
<dbReference type="UCSC" id="uc002zxw.4">
    <property type="organism name" value="human"/>
</dbReference>
<dbReference type="AGR" id="HGNC:15559"/>
<dbReference type="CTD" id="400916"/>
<dbReference type="DisGeNET" id="400916"/>
<dbReference type="GeneCards" id="CHCHD10"/>
<dbReference type="GeneReviews" id="CHCHD10"/>
<dbReference type="HGNC" id="HGNC:15559">
    <property type="gene designation" value="CHCHD10"/>
</dbReference>
<dbReference type="HPA" id="ENSG00000250479">
    <property type="expression patterns" value="Tissue enhanced (heart muscle, skeletal muscle)"/>
</dbReference>
<dbReference type="MalaCards" id="CHCHD10"/>
<dbReference type="MIM" id="615048">
    <property type="type" value="phenotype"/>
</dbReference>
<dbReference type="MIM" id="615903">
    <property type="type" value="gene"/>
</dbReference>
<dbReference type="MIM" id="615911">
    <property type="type" value="phenotype"/>
</dbReference>
<dbReference type="MIM" id="616209">
    <property type="type" value="phenotype"/>
</dbReference>
<dbReference type="neXtProt" id="NX_Q8WYQ3"/>
<dbReference type="OpenTargets" id="ENSG00000250479"/>
<dbReference type="Orphanet" id="803">
    <property type="disease" value="Amyotrophic lateral sclerosis"/>
</dbReference>
<dbReference type="Orphanet" id="457050">
    <property type="disease" value="Autosomal dominant mitochondrial myopathy with exercise intolerance"/>
</dbReference>
<dbReference type="Orphanet" id="275872">
    <property type="disease" value="Frontotemporal dementia with motor neuron disease"/>
</dbReference>
<dbReference type="Orphanet" id="276435">
    <property type="disease" value="Lower motor neuron syndrome with late-adult onset"/>
</dbReference>
<dbReference type="PharmGKB" id="PA162382225"/>
<dbReference type="VEuPathDB" id="HostDB:ENSG00000250479"/>
<dbReference type="eggNOG" id="KOG4090">
    <property type="taxonomic scope" value="Eukaryota"/>
</dbReference>
<dbReference type="GeneTree" id="ENSGT00940000161345"/>
<dbReference type="HOGENOM" id="CLU_093520_2_2_1"/>
<dbReference type="InParanoid" id="Q8WYQ3"/>
<dbReference type="OMA" id="PSQYGPC"/>
<dbReference type="OrthoDB" id="1106148at2759"/>
<dbReference type="PAN-GO" id="Q8WYQ3">
    <property type="GO annotations" value="3 GO annotations based on evolutionary models"/>
</dbReference>
<dbReference type="PhylomeDB" id="Q8WYQ3"/>
<dbReference type="TreeFam" id="TF318060"/>
<dbReference type="PathwayCommons" id="Q8WYQ3"/>
<dbReference type="Reactome" id="R-HSA-1268020">
    <property type="pathway name" value="Mitochondrial protein import"/>
</dbReference>
<dbReference type="SignaLink" id="Q8WYQ3"/>
<dbReference type="BioGRID-ORCS" id="400916">
    <property type="hits" value="27 hits in 1154 CRISPR screens"/>
</dbReference>
<dbReference type="ChiTaRS" id="CHCHD10">
    <property type="organism name" value="human"/>
</dbReference>
<dbReference type="GenomeRNAi" id="400916"/>
<dbReference type="Pharos" id="Q8WYQ3">
    <property type="development level" value="Tbio"/>
</dbReference>
<dbReference type="PRO" id="PR:Q8WYQ3"/>
<dbReference type="Proteomes" id="UP000005640">
    <property type="component" value="Chromosome 22"/>
</dbReference>
<dbReference type="RNAct" id="Q8WYQ3">
    <property type="molecule type" value="protein"/>
</dbReference>
<dbReference type="Bgee" id="ENSG00000250479">
    <property type="expression patterns" value="Expressed in apex of heart and 98 other cell types or tissues"/>
</dbReference>
<dbReference type="ExpressionAtlas" id="Q8WYQ3">
    <property type="expression patterns" value="baseline and differential"/>
</dbReference>
<dbReference type="GO" id="GO:0061617">
    <property type="term" value="C:MICOS complex"/>
    <property type="evidence" value="ECO:0000314"/>
    <property type="project" value="UniProtKB"/>
</dbReference>
<dbReference type="GO" id="GO:0005758">
    <property type="term" value="C:mitochondrial intermembrane space"/>
    <property type="evidence" value="ECO:0000314"/>
    <property type="project" value="UniProtKB"/>
</dbReference>
<dbReference type="GO" id="GO:0005739">
    <property type="term" value="C:mitochondrion"/>
    <property type="evidence" value="ECO:0000314"/>
    <property type="project" value="BHF-UCL"/>
</dbReference>
<dbReference type="GO" id="GO:0005634">
    <property type="term" value="C:nucleus"/>
    <property type="evidence" value="ECO:0000318"/>
    <property type="project" value="GO_Central"/>
</dbReference>
<dbReference type="GO" id="GO:0051457">
    <property type="term" value="P:maintenance of protein location in nucleus"/>
    <property type="evidence" value="ECO:0000250"/>
    <property type="project" value="UniProtKB"/>
</dbReference>
<dbReference type="GO" id="GO:0099558">
    <property type="term" value="P:maintenance of synapse structure"/>
    <property type="evidence" value="ECO:0000250"/>
    <property type="project" value="UniProtKB"/>
</dbReference>
<dbReference type="GO" id="GO:0031930">
    <property type="term" value="P:mitochondria-nucleus signaling pathway"/>
    <property type="evidence" value="ECO:0007669"/>
    <property type="project" value="Ensembl"/>
</dbReference>
<dbReference type="GO" id="GO:0090144">
    <property type="term" value="P:mitochondrial nucleoid organization"/>
    <property type="evidence" value="ECO:0000315"/>
    <property type="project" value="UniProtKB"/>
</dbReference>
<dbReference type="GO" id="GO:0007005">
    <property type="term" value="P:mitochondrion organization"/>
    <property type="evidence" value="ECO:0000315"/>
    <property type="project" value="UniProtKB"/>
</dbReference>
<dbReference type="GO" id="GO:0006119">
    <property type="term" value="P:oxidative phosphorylation"/>
    <property type="evidence" value="ECO:0000315"/>
    <property type="project" value="BHF-UCL"/>
</dbReference>
<dbReference type="GO" id="GO:1903852">
    <property type="term" value="P:positive regulation of cristae formation"/>
    <property type="evidence" value="ECO:0000315"/>
    <property type="project" value="UniProtKB"/>
</dbReference>
<dbReference type="GO" id="GO:1901030">
    <property type="term" value="P:positive regulation of mitochondrial outer membrane permeabilization involved in apoptotic signaling pathway"/>
    <property type="evidence" value="ECO:0000315"/>
    <property type="project" value="UniProtKB"/>
</dbReference>
<dbReference type="GO" id="GO:1903109">
    <property type="term" value="P:positive regulation of mitochondrial transcription"/>
    <property type="evidence" value="ECO:0000250"/>
    <property type="project" value="UniProtKB"/>
</dbReference>
<dbReference type="GO" id="GO:0065003">
    <property type="term" value="P:protein-containing complex assembly"/>
    <property type="evidence" value="ECO:0000315"/>
    <property type="project" value="UniProtKB"/>
</dbReference>
<dbReference type="GO" id="GO:0030322">
    <property type="term" value="P:stabilization of membrane potential"/>
    <property type="evidence" value="ECO:0000250"/>
    <property type="project" value="UniProtKB"/>
</dbReference>
<dbReference type="InterPro" id="IPR010625">
    <property type="entry name" value="CHCH"/>
</dbReference>
<dbReference type="InterPro" id="IPR055304">
    <property type="entry name" value="CHCHD2/10-like"/>
</dbReference>
<dbReference type="PANTHER" id="PTHR13523">
    <property type="entry name" value="COILED-COIL-HELIX-COILED-COIL-HELIX DOMAIN CONTAINING 2/NUR77"/>
    <property type="match status" value="1"/>
</dbReference>
<dbReference type="PANTHER" id="PTHR13523:SF4">
    <property type="entry name" value="COILED-COIL-HELIX-COILED-COIL-HELIX DOMAIN-CONTAINING PROTEIN 10, MITOCHONDRIAL"/>
    <property type="match status" value="1"/>
</dbReference>
<dbReference type="Pfam" id="PF06747">
    <property type="entry name" value="CHCH"/>
    <property type="match status" value="1"/>
</dbReference>
<dbReference type="PROSITE" id="PS51808">
    <property type="entry name" value="CHCH"/>
    <property type="match status" value="1"/>
</dbReference>
<protein>
    <recommendedName>
        <fullName>Coiled-coil-helix-coiled-coil-helix domain-containing protein 10, mitochondrial</fullName>
    </recommendedName>
    <alternativeName>
        <fullName>Protein N27C7-4</fullName>
    </alternativeName>
</protein>
<proteinExistence type="evidence at protein level"/>
<reference key="1">
    <citation type="submission" date="2000-11" db="EMBL/GenBank/DDBJ databases">
        <title>Molecular cloning of N27C7-4 gene.</title>
        <authorList>
            <person name="Shimizu N."/>
            <person name="Minosima S."/>
            <person name="Kawasaki K."/>
            <person name="Sasaki T."/>
            <person name="Hosono K."/>
        </authorList>
    </citation>
    <scope>NUCLEOTIDE SEQUENCE [GENOMIC DNA]</scope>
</reference>
<reference key="2">
    <citation type="journal article" date="2004" name="Nat. Genet.">
        <title>Complete sequencing and characterization of 21,243 full-length human cDNAs.</title>
        <authorList>
            <person name="Ota T."/>
            <person name="Suzuki Y."/>
            <person name="Nishikawa T."/>
            <person name="Otsuki T."/>
            <person name="Sugiyama T."/>
            <person name="Irie R."/>
            <person name="Wakamatsu A."/>
            <person name="Hayashi K."/>
            <person name="Sato H."/>
            <person name="Nagai K."/>
            <person name="Kimura K."/>
            <person name="Makita H."/>
            <person name="Sekine M."/>
            <person name="Obayashi M."/>
            <person name="Nishi T."/>
            <person name="Shibahara T."/>
            <person name="Tanaka T."/>
            <person name="Ishii S."/>
            <person name="Yamamoto J."/>
            <person name="Saito K."/>
            <person name="Kawai Y."/>
            <person name="Isono Y."/>
            <person name="Nakamura Y."/>
            <person name="Nagahari K."/>
            <person name="Murakami K."/>
            <person name="Yasuda T."/>
            <person name="Iwayanagi T."/>
            <person name="Wagatsuma M."/>
            <person name="Shiratori A."/>
            <person name="Sudo H."/>
            <person name="Hosoiri T."/>
            <person name="Kaku Y."/>
            <person name="Kodaira H."/>
            <person name="Kondo H."/>
            <person name="Sugawara M."/>
            <person name="Takahashi M."/>
            <person name="Kanda K."/>
            <person name="Yokoi T."/>
            <person name="Furuya T."/>
            <person name="Kikkawa E."/>
            <person name="Omura Y."/>
            <person name="Abe K."/>
            <person name="Kamihara K."/>
            <person name="Katsuta N."/>
            <person name="Sato K."/>
            <person name="Tanikawa M."/>
            <person name="Yamazaki M."/>
            <person name="Ninomiya K."/>
            <person name="Ishibashi T."/>
            <person name="Yamashita H."/>
            <person name="Murakawa K."/>
            <person name="Fujimori K."/>
            <person name="Tanai H."/>
            <person name="Kimata M."/>
            <person name="Watanabe M."/>
            <person name="Hiraoka S."/>
            <person name="Chiba Y."/>
            <person name="Ishida S."/>
            <person name="Ono Y."/>
            <person name="Takiguchi S."/>
            <person name="Watanabe S."/>
            <person name="Yosida M."/>
            <person name="Hotuta T."/>
            <person name="Kusano J."/>
            <person name="Kanehori K."/>
            <person name="Takahashi-Fujii A."/>
            <person name="Hara H."/>
            <person name="Tanase T.-O."/>
            <person name="Nomura Y."/>
            <person name="Togiya S."/>
            <person name="Komai F."/>
            <person name="Hara R."/>
            <person name="Takeuchi K."/>
            <person name="Arita M."/>
            <person name="Imose N."/>
            <person name="Musashino K."/>
            <person name="Yuuki H."/>
            <person name="Oshima A."/>
            <person name="Sasaki N."/>
            <person name="Aotsuka S."/>
            <person name="Yoshikawa Y."/>
            <person name="Matsunawa H."/>
            <person name="Ichihara T."/>
            <person name="Shiohata N."/>
            <person name="Sano S."/>
            <person name="Moriya S."/>
            <person name="Momiyama H."/>
            <person name="Satoh N."/>
            <person name="Takami S."/>
            <person name="Terashima Y."/>
            <person name="Suzuki O."/>
            <person name="Nakagawa S."/>
            <person name="Senoh A."/>
            <person name="Mizoguchi H."/>
            <person name="Goto Y."/>
            <person name="Shimizu F."/>
            <person name="Wakebe H."/>
            <person name="Hishigaki H."/>
            <person name="Watanabe T."/>
            <person name="Sugiyama A."/>
            <person name="Takemoto M."/>
            <person name="Kawakami B."/>
            <person name="Yamazaki M."/>
            <person name="Watanabe K."/>
            <person name="Kumagai A."/>
            <person name="Itakura S."/>
            <person name="Fukuzumi Y."/>
            <person name="Fujimori Y."/>
            <person name="Komiyama M."/>
            <person name="Tashiro H."/>
            <person name="Tanigami A."/>
            <person name="Fujiwara T."/>
            <person name="Ono T."/>
            <person name="Yamada K."/>
            <person name="Fujii Y."/>
            <person name="Ozaki K."/>
            <person name="Hirao M."/>
            <person name="Ohmori Y."/>
            <person name="Kawabata A."/>
            <person name="Hikiji T."/>
            <person name="Kobatake N."/>
            <person name="Inagaki H."/>
            <person name="Ikema Y."/>
            <person name="Okamoto S."/>
            <person name="Okitani R."/>
            <person name="Kawakami T."/>
            <person name="Noguchi S."/>
            <person name="Itoh T."/>
            <person name="Shigeta K."/>
            <person name="Senba T."/>
            <person name="Matsumura K."/>
            <person name="Nakajima Y."/>
            <person name="Mizuno T."/>
            <person name="Morinaga M."/>
            <person name="Sasaki M."/>
            <person name="Togashi T."/>
            <person name="Oyama M."/>
            <person name="Hata H."/>
            <person name="Watanabe M."/>
            <person name="Komatsu T."/>
            <person name="Mizushima-Sugano J."/>
            <person name="Satoh T."/>
            <person name="Shirai Y."/>
            <person name="Takahashi Y."/>
            <person name="Nakagawa K."/>
            <person name="Okumura K."/>
            <person name="Nagase T."/>
            <person name="Nomura N."/>
            <person name="Kikuchi H."/>
            <person name="Masuho Y."/>
            <person name="Yamashita R."/>
            <person name="Nakai K."/>
            <person name="Yada T."/>
            <person name="Nakamura Y."/>
            <person name="Ohara O."/>
            <person name="Isogai T."/>
            <person name="Sugano S."/>
        </authorList>
    </citation>
    <scope>NUCLEOTIDE SEQUENCE [LARGE SCALE MRNA]</scope>
    <source>
        <tissue>Cerebellum</tissue>
    </source>
</reference>
<reference key="3">
    <citation type="submission" date="2005-07" db="EMBL/GenBank/DDBJ databases">
        <authorList>
            <person name="Mural R.J."/>
            <person name="Istrail S."/>
            <person name="Sutton G.G."/>
            <person name="Florea L."/>
            <person name="Halpern A.L."/>
            <person name="Mobarry C.M."/>
            <person name="Lippert R."/>
            <person name="Walenz B."/>
            <person name="Shatkay H."/>
            <person name="Dew I."/>
            <person name="Miller J.R."/>
            <person name="Flanigan M.J."/>
            <person name="Edwards N.J."/>
            <person name="Bolanos R."/>
            <person name="Fasulo D."/>
            <person name="Halldorsson B.V."/>
            <person name="Hannenhalli S."/>
            <person name="Turner R."/>
            <person name="Yooseph S."/>
            <person name="Lu F."/>
            <person name="Nusskern D.R."/>
            <person name="Shue B.C."/>
            <person name="Zheng X.H."/>
            <person name="Zhong F."/>
            <person name="Delcher A.L."/>
            <person name="Huson D.H."/>
            <person name="Kravitz S.A."/>
            <person name="Mouchard L."/>
            <person name="Reinert K."/>
            <person name="Remington K.A."/>
            <person name="Clark A.G."/>
            <person name="Waterman M.S."/>
            <person name="Eichler E.E."/>
            <person name="Adams M.D."/>
            <person name="Hunkapiller M.W."/>
            <person name="Myers E.W."/>
            <person name="Venter J.C."/>
        </authorList>
    </citation>
    <scope>NUCLEOTIDE SEQUENCE [LARGE SCALE GENOMIC DNA]</scope>
</reference>
<reference key="4">
    <citation type="journal article" date="2004" name="Genome Res.">
        <title>The status, quality, and expansion of the NIH full-length cDNA project: the Mammalian Gene Collection (MGC).</title>
        <authorList>
            <consortium name="The MGC Project Team"/>
        </authorList>
    </citation>
    <scope>NUCLEOTIDE SEQUENCE [LARGE SCALE MRNA]</scope>
    <source>
        <tissue>Pancreas</tissue>
    </source>
</reference>
<reference key="5">
    <citation type="journal article" date="2014" name="Brain">
        <title>A mitochondrial origin for frontotemporal dementia and amyotrophic lateral sclerosis through CHCHD10 involvement.</title>
        <authorList>
            <person name="Bannwarth S."/>
            <person name="Ait-El-Mkadem S."/>
            <person name="Chaussenot A."/>
            <person name="Genin E.C."/>
            <person name="Lacas-Gervais S."/>
            <person name="Fragaki K."/>
            <person name="Berg-Alonso L."/>
            <person name="Kageyama Y."/>
            <person name="Serre V."/>
            <person name="Moore D.G."/>
            <person name="Verschueren A."/>
            <person name="Rouzier C."/>
            <person name="Le Ber I."/>
            <person name="Auge G."/>
            <person name="Cochaud C."/>
            <person name="Lespinasse F."/>
            <person name="N'Guyen K."/>
            <person name="de Septenville A."/>
            <person name="Brice A."/>
            <person name="Yu-Wai-Man P."/>
            <person name="Sesaki H."/>
            <person name="Pouget J."/>
            <person name="Paquis-Flucklinger V."/>
        </authorList>
    </citation>
    <scope>FUNCTION</scope>
    <scope>TISSUE SPECIFICITY</scope>
    <scope>SUBCELLULAR LOCATION</scope>
    <scope>INVOLVEMENT IN FTDALS2</scope>
    <scope>VARIANT FTDALS2 LEU-59</scope>
    <scope>CHARACTERIZATION OF VARIANT FTDALS2 LEU-59</scope>
</reference>
<reference key="6">
    <citation type="journal article" date="2015" name="Ann. Neurol.">
        <title>Late onset spinal motor neuronopathy is caused by mutation in CHCHD10.</title>
        <authorList>
            <person name="Penttilae S."/>
            <person name="Jokela M."/>
            <person name="Bouquin H."/>
            <person name="Saukkonen A.M."/>
            <person name="Toivanen J."/>
            <person name="Udd B."/>
        </authorList>
    </citation>
    <scope>INVOLVEMENT IN SMAJ</scope>
    <scope>VARIANT SMAJ VAL-66</scope>
</reference>
<reference key="7">
    <citation type="journal article" date="2015" name="Neurogenetics">
        <title>Mutation in the novel nuclear-encoded mitochondrial protein CHCHD10 in a family with autosomal dominant mitochondrial myopathy.</title>
        <authorList>
            <person name="Ajroud-Driss S."/>
            <person name="Fecto F."/>
            <person name="Ajroud K."/>
            <person name="Lalani I."/>
            <person name="Calvo S.E."/>
            <person name="Mootha V.K."/>
            <person name="Deng H.X."/>
            <person name="Siddique N."/>
            <person name="Tahmoush A.J."/>
            <person name="Heiman-Patterson T.D."/>
            <person name="Siddique T."/>
        </authorList>
    </citation>
    <scope>INVOLVEMENT IN IMMD</scope>
    <scope>VARIANTS IMMD SER-15 AND ARG-58</scope>
    <scope>CHARACTERIZATION OF VARIANTS IMMD SER-15 AND ARG-58</scope>
</reference>
<reference key="8">
    <citation type="journal article" date="2014" name="Neurobiol. Aging">
        <title>Screening of CHCHD10 in a French cohort confirms the involvement of this gene in frontotemporal dementia with amyotrophic lateral sclerosis patients.</title>
        <authorList>
            <consortium name="The French research network on FTD and FTD-ALS"/>
            <person name="Chaussenot A."/>
            <person name="Le Ber I."/>
            <person name="Ait-El-Mkadem S."/>
            <person name="Camuzat A."/>
            <person name="de Septenville A."/>
            <person name="Bannwarth S."/>
            <person name="Genin E.C."/>
            <person name="Serre V."/>
            <person name="Auge G."/>
            <person name="Brice A."/>
            <person name="Pouget J."/>
            <person name="Paquis-Flucklinger V."/>
        </authorList>
    </citation>
    <scope>VARIANT FTDALS2 SER-34</scope>
</reference>
<gene>
    <name type="primary">CHCHD10</name>
    <name type="synonym">C22orf16</name>
</gene>
<feature type="transit peptide" description="Mitochondrion" evidence="1">
    <location>
        <begin position="1"/>
        <end position="16"/>
    </location>
</feature>
<feature type="chain" id="PRO_0000254038" description="Coiled-coil-helix-coiled-coil-helix domain-containing protein 10, mitochondrial">
    <location>
        <begin position="17"/>
        <end position="142"/>
    </location>
</feature>
<feature type="domain" description="CHCH" evidence="2">
    <location>
        <begin position="99"/>
        <end position="140"/>
    </location>
</feature>
<feature type="region of interest" description="Disordered" evidence="3">
    <location>
        <begin position="1"/>
        <end position="45"/>
    </location>
</feature>
<feature type="region of interest" description="Disordered" evidence="3">
    <location>
        <begin position="68"/>
        <end position="97"/>
    </location>
</feature>
<feature type="short sequence motif" description="Cx9C motif 1" evidence="2">
    <location>
        <begin position="102"/>
        <end position="112"/>
    </location>
</feature>
<feature type="short sequence motif" description="Cx9C motif 2" evidence="2">
    <location>
        <begin position="122"/>
        <end position="132"/>
    </location>
</feature>
<feature type="compositionally biased region" description="Low complexity" evidence="3">
    <location>
        <begin position="1"/>
        <end position="20"/>
    </location>
</feature>
<feature type="compositionally biased region" description="Pro residues" evidence="3">
    <location>
        <begin position="21"/>
        <end position="39"/>
    </location>
</feature>
<feature type="compositionally biased region" description="Low complexity" evidence="3">
    <location>
        <begin position="80"/>
        <end position="90"/>
    </location>
</feature>
<feature type="disulfide bond" evidence="2">
    <location>
        <begin position="102"/>
        <end position="132"/>
    </location>
</feature>
<feature type="disulfide bond" evidence="2">
    <location>
        <begin position="112"/>
        <end position="122"/>
    </location>
</feature>
<feature type="sequence variant" id="VAR_073283" description="In IMMD; associated in cis with R-58 in a IMMD family; uncertain significance; does not affect mitochondrial structure and organization; dbSNP:rs730880032." evidence="6">
    <original>R</original>
    <variation>S</variation>
    <location>
        <position position="15"/>
    </location>
</feature>
<feature type="sequence variant" id="VAR_071805" description="In FTDALS2; dbSNP:rs551521196." evidence="5">
    <original>P</original>
    <variation>S</variation>
    <location>
        <position position="34"/>
    </location>
</feature>
<feature type="sequence variant" id="VAR_073284" description="In IMMD; associated in cis with S-15 in a IMMD family; causes mitochondrial fragmentation; dbSNP:rs730880033." evidence="6">
    <original>G</original>
    <variation>R</variation>
    <location>
        <position position="58"/>
    </location>
</feature>
<feature type="sequence variant" id="VAR_071806" description="In FTDALS2; results in disorganization of mitochondrial cristae; dbSNP:rs587777574." evidence="4">
    <original>S</original>
    <variation>L</variation>
    <location>
        <position position="59"/>
    </location>
</feature>
<feature type="sequence variant" id="VAR_073285" description="In SMAJ; dbSNP:rs730880031." evidence="7">
    <original>G</original>
    <variation>V</variation>
    <location>
        <position position="66"/>
    </location>
</feature>
<name>CHC10_HUMAN</name>
<organism>
    <name type="scientific">Homo sapiens</name>
    <name type="common">Human</name>
    <dbReference type="NCBI Taxonomy" id="9606"/>
    <lineage>
        <taxon>Eukaryota</taxon>
        <taxon>Metazoa</taxon>
        <taxon>Chordata</taxon>
        <taxon>Craniata</taxon>
        <taxon>Vertebrata</taxon>
        <taxon>Euteleostomi</taxon>
        <taxon>Mammalia</taxon>
        <taxon>Eutheria</taxon>
        <taxon>Euarchontoglires</taxon>
        <taxon>Primates</taxon>
        <taxon>Haplorrhini</taxon>
        <taxon>Catarrhini</taxon>
        <taxon>Hominidae</taxon>
        <taxon>Homo</taxon>
    </lineage>
</organism>
<keyword id="KW-0036">Amyotrophic lateral sclerosis</keyword>
<keyword id="KW-0225">Disease variant</keyword>
<keyword id="KW-1015">Disulfide bond</keyword>
<keyword id="KW-0496">Mitochondrion</keyword>
<keyword id="KW-0523">Neurodegeneration</keyword>
<keyword id="KW-1267">Proteomics identification</keyword>
<keyword id="KW-1185">Reference proteome</keyword>
<keyword id="KW-0809">Transit peptide</keyword>
<accession>Q8WYQ3</accession>
<accession>A8K0J5</accession>
<evidence type="ECO:0000255" key="1"/>
<evidence type="ECO:0000255" key="2">
    <source>
        <dbReference type="PROSITE-ProRule" id="PRU01150"/>
    </source>
</evidence>
<evidence type="ECO:0000256" key="3">
    <source>
        <dbReference type="SAM" id="MobiDB-lite"/>
    </source>
</evidence>
<evidence type="ECO:0000269" key="4">
    <source>
    </source>
</evidence>
<evidence type="ECO:0000269" key="5">
    <source>
    </source>
</evidence>
<evidence type="ECO:0000269" key="6">
    <source>
    </source>
</evidence>
<evidence type="ECO:0000269" key="7">
    <source>
    </source>
</evidence>
<sequence length="142" mass="14149">MPRGSRSAASRPASRPAAPSAHPPAHPPPSAAAPAPAPSGQPGLMAQMATTAAGVAVGSAVGHVMGSALTGAFSGGSSEPSQPAVQQAPTPAAPQPLQMGPCAYEIRQFLDCSTTQSDLSLCEGFSEALKQCKYYHGLSSLP</sequence>